<sequence length="365" mass="40686">MKKTALYHWHEQAGARIIDFGGYLMPVQYSGIIAEHRAVRSAAGLFDVSHMGNFYVTGERSEAFLQYMVTNDLSKVRDGEAQYNLMLYPNGGVVDDLIIYRLDSKTFFLIVNASNTEKDYAWLQQHIGAFDGVCLEDHTDRLSLIALQGPVAIDIVKTVFPSVDFDALLQFQFCRTLYGDAPVMIARTGYTGEKGVEICLPNEAALPLWEALYDAGRACGISPVGLGARDTLRLEMGYSLYGHEIDQDINPLEARLKWAVKMDKGSFIGREACQQVELHLTRGVAGFSIESRVLPRQHCKVYNTDRQEIGWVCSGTLSPTLQEPIGTCNIVRKYITSGDSVFVDVRGTLHKGEIRRLPFVKTSLG</sequence>
<protein>
    <recommendedName>
        <fullName evidence="1">Aminomethyltransferase</fullName>
        <ecNumber evidence="1">2.1.2.10</ecNumber>
    </recommendedName>
    <alternativeName>
        <fullName evidence="1">Glycine cleavage system T protein</fullName>
    </alternativeName>
</protein>
<accession>A1BI02</accession>
<evidence type="ECO:0000255" key="1">
    <source>
        <dbReference type="HAMAP-Rule" id="MF_00259"/>
    </source>
</evidence>
<dbReference type="EC" id="2.1.2.10" evidence="1"/>
<dbReference type="EMBL" id="CP000492">
    <property type="protein sequence ID" value="ABL66029.1"/>
    <property type="molecule type" value="Genomic_DNA"/>
</dbReference>
<dbReference type="RefSeq" id="WP_011745833.1">
    <property type="nucleotide sequence ID" value="NC_008639.1"/>
</dbReference>
<dbReference type="SMR" id="A1BI02"/>
<dbReference type="STRING" id="290317.Cpha266_2017"/>
<dbReference type="KEGG" id="cph:Cpha266_2017"/>
<dbReference type="eggNOG" id="COG0404">
    <property type="taxonomic scope" value="Bacteria"/>
</dbReference>
<dbReference type="HOGENOM" id="CLU_007884_10_2_10"/>
<dbReference type="OrthoDB" id="9774591at2"/>
<dbReference type="Proteomes" id="UP000008701">
    <property type="component" value="Chromosome"/>
</dbReference>
<dbReference type="GO" id="GO:0005829">
    <property type="term" value="C:cytosol"/>
    <property type="evidence" value="ECO:0007669"/>
    <property type="project" value="TreeGrafter"/>
</dbReference>
<dbReference type="GO" id="GO:0005960">
    <property type="term" value="C:glycine cleavage complex"/>
    <property type="evidence" value="ECO:0007669"/>
    <property type="project" value="InterPro"/>
</dbReference>
<dbReference type="GO" id="GO:0004047">
    <property type="term" value="F:aminomethyltransferase activity"/>
    <property type="evidence" value="ECO:0007669"/>
    <property type="project" value="UniProtKB-UniRule"/>
</dbReference>
<dbReference type="GO" id="GO:0008483">
    <property type="term" value="F:transaminase activity"/>
    <property type="evidence" value="ECO:0007669"/>
    <property type="project" value="UniProtKB-KW"/>
</dbReference>
<dbReference type="GO" id="GO:0019464">
    <property type="term" value="P:glycine decarboxylation via glycine cleavage system"/>
    <property type="evidence" value="ECO:0007669"/>
    <property type="project" value="UniProtKB-UniRule"/>
</dbReference>
<dbReference type="FunFam" id="3.30.70.1400:FF:000001">
    <property type="entry name" value="Aminomethyltransferase"/>
    <property type="match status" value="1"/>
</dbReference>
<dbReference type="Gene3D" id="2.40.30.110">
    <property type="entry name" value="Aminomethyltransferase beta-barrel domains"/>
    <property type="match status" value="1"/>
</dbReference>
<dbReference type="Gene3D" id="3.30.70.1400">
    <property type="entry name" value="Aminomethyltransferase beta-barrel domains"/>
    <property type="match status" value="1"/>
</dbReference>
<dbReference type="Gene3D" id="4.10.1250.10">
    <property type="entry name" value="Aminomethyltransferase fragment"/>
    <property type="match status" value="1"/>
</dbReference>
<dbReference type="Gene3D" id="3.30.1360.120">
    <property type="entry name" value="Probable tRNA modification gtpase trme, domain 1"/>
    <property type="match status" value="1"/>
</dbReference>
<dbReference type="HAMAP" id="MF_00259">
    <property type="entry name" value="GcvT"/>
    <property type="match status" value="1"/>
</dbReference>
<dbReference type="InterPro" id="IPR006223">
    <property type="entry name" value="GCS_T"/>
</dbReference>
<dbReference type="InterPro" id="IPR022903">
    <property type="entry name" value="GCS_T_bac"/>
</dbReference>
<dbReference type="InterPro" id="IPR013977">
    <property type="entry name" value="GCST_C"/>
</dbReference>
<dbReference type="InterPro" id="IPR006222">
    <property type="entry name" value="GCV_T_N"/>
</dbReference>
<dbReference type="InterPro" id="IPR028896">
    <property type="entry name" value="GcvT/YgfZ/DmdA"/>
</dbReference>
<dbReference type="InterPro" id="IPR029043">
    <property type="entry name" value="GcvT/YgfZ_C"/>
</dbReference>
<dbReference type="InterPro" id="IPR027266">
    <property type="entry name" value="TrmE/GcvT_dom1"/>
</dbReference>
<dbReference type="NCBIfam" id="TIGR00528">
    <property type="entry name" value="gcvT"/>
    <property type="match status" value="1"/>
</dbReference>
<dbReference type="NCBIfam" id="NF001567">
    <property type="entry name" value="PRK00389.1"/>
    <property type="match status" value="1"/>
</dbReference>
<dbReference type="PANTHER" id="PTHR43757">
    <property type="entry name" value="AMINOMETHYLTRANSFERASE"/>
    <property type="match status" value="1"/>
</dbReference>
<dbReference type="PANTHER" id="PTHR43757:SF2">
    <property type="entry name" value="AMINOMETHYLTRANSFERASE, MITOCHONDRIAL"/>
    <property type="match status" value="1"/>
</dbReference>
<dbReference type="Pfam" id="PF01571">
    <property type="entry name" value="GCV_T"/>
    <property type="match status" value="1"/>
</dbReference>
<dbReference type="Pfam" id="PF08669">
    <property type="entry name" value="GCV_T_C"/>
    <property type="match status" value="1"/>
</dbReference>
<dbReference type="PIRSF" id="PIRSF006487">
    <property type="entry name" value="GcvT"/>
    <property type="match status" value="1"/>
</dbReference>
<dbReference type="SUPFAM" id="SSF101790">
    <property type="entry name" value="Aminomethyltransferase beta-barrel domain"/>
    <property type="match status" value="1"/>
</dbReference>
<dbReference type="SUPFAM" id="SSF103025">
    <property type="entry name" value="Folate-binding domain"/>
    <property type="match status" value="1"/>
</dbReference>
<gene>
    <name evidence="1" type="primary">gcvT</name>
    <name type="ordered locus">Cpha266_2017</name>
</gene>
<reference key="1">
    <citation type="submission" date="2006-12" db="EMBL/GenBank/DDBJ databases">
        <title>Complete sequence of Chlorobium phaeobacteroides DSM 266.</title>
        <authorList>
            <consortium name="US DOE Joint Genome Institute"/>
            <person name="Copeland A."/>
            <person name="Lucas S."/>
            <person name="Lapidus A."/>
            <person name="Barry K."/>
            <person name="Detter J.C."/>
            <person name="Glavina del Rio T."/>
            <person name="Hammon N."/>
            <person name="Israni S."/>
            <person name="Pitluck S."/>
            <person name="Goltsman E."/>
            <person name="Schmutz J."/>
            <person name="Larimer F."/>
            <person name="Land M."/>
            <person name="Hauser L."/>
            <person name="Mikhailova N."/>
            <person name="Li T."/>
            <person name="Overmann J."/>
            <person name="Bryant D.A."/>
            <person name="Richardson P."/>
        </authorList>
    </citation>
    <scope>NUCLEOTIDE SEQUENCE [LARGE SCALE GENOMIC DNA]</scope>
    <source>
        <strain>DSM 266 / SMG 266 / 2430</strain>
    </source>
</reference>
<proteinExistence type="inferred from homology"/>
<keyword id="KW-0032">Aminotransferase</keyword>
<keyword id="KW-1185">Reference proteome</keyword>
<keyword id="KW-0808">Transferase</keyword>
<feature type="chain" id="PRO_1000047655" description="Aminomethyltransferase">
    <location>
        <begin position="1"/>
        <end position="365"/>
    </location>
</feature>
<comment type="function">
    <text evidence="1">The glycine cleavage system catalyzes the degradation of glycine.</text>
</comment>
<comment type="catalytic activity">
    <reaction evidence="1">
        <text>N(6)-[(R)-S(8)-aminomethyldihydrolipoyl]-L-lysyl-[protein] + (6S)-5,6,7,8-tetrahydrofolate = N(6)-[(R)-dihydrolipoyl]-L-lysyl-[protein] + (6R)-5,10-methylene-5,6,7,8-tetrahydrofolate + NH4(+)</text>
        <dbReference type="Rhea" id="RHEA:16945"/>
        <dbReference type="Rhea" id="RHEA-COMP:10475"/>
        <dbReference type="Rhea" id="RHEA-COMP:10492"/>
        <dbReference type="ChEBI" id="CHEBI:15636"/>
        <dbReference type="ChEBI" id="CHEBI:28938"/>
        <dbReference type="ChEBI" id="CHEBI:57453"/>
        <dbReference type="ChEBI" id="CHEBI:83100"/>
        <dbReference type="ChEBI" id="CHEBI:83143"/>
        <dbReference type="EC" id="2.1.2.10"/>
    </reaction>
</comment>
<comment type="subunit">
    <text evidence="1">The glycine cleavage system is composed of four proteins: P, T, L and H.</text>
</comment>
<comment type="similarity">
    <text evidence="1">Belongs to the GcvT family.</text>
</comment>
<organism>
    <name type="scientific">Chlorobium phaeobacteroides (strain DSM 266 / SMG 266 / 2430)</name>
    <dbReference type="NCBI Taxonomy" id="290317"/>
    <lineage>
        <taxon>Bacteria</taxon>
        <taxon>Pseudomonadati</taxon>
        <taxon>Chlorobiota</taxon>
        <taxon>Chlorobiia</taxon>
        <taxon>Chlorobiales</taxon>
        <taxon>Chlorobiaceae</taxon>
        <taxon>Chlorobium/Pelodictyon group</taxon>
        <taxon>Chlorobium</taxon>
    </lineage>
</organism>
<name>GCST_CHLPD</name>